<dbReference type="EMBL" id="BX640429">
    <property type="protein sequence ID" value="CAE37441.1"/>
    <property type="molecule type" value="Genomic_DNA"/>
</dbReference>
<dbReference type="RefSeq" id="WP_010928386.1">
    <property type="nucleotide sequence ID" value="NC_002928.3"/>
</dbReference>
<dbReference type="SMR" id="Q7W8J2"/>
<dbReference type="GeneID" id="93203915"/>
<dbReference type="KEGG" id="bpa:BPP2141"/>
<dbReference type="HOGENOM" id="CLU_035023_2_2_4"/>
<dbReference type="Proteomes" id="UP000001421">
    <property type="component" value="Chromosome"/>
</dbReference>
<dbReference type="GO" id="GO:0005886">
    <property type="term" value="C:plasma membrane"/>
    <property type="evidence" value="ECO:0007669"/>
    <property type="project" value="UniProtKB-SubCell"/>
</dbReference>
<dbReference type="GO" id="GO:0008324">
    <property type="term" value="F:monoatomic cation transmembrane transporter activity"/>
    <property type="evidence" value="ECO:0007669"/>
    <property type="project" value="InterPro"/>
</dbReference>
<dbReference type="GO" id="GO:0006813">
    <property type="term" value="P:potassium ion transport"/>
    <property type="evidence" value="ECO:0007669"/>
    <property type="project" value="InterPro"/>
</dbReference>
<dbReference type="InterPro" id="IPR050144">
    <property type="entry name" value="AAE_transporter"/>
</dbReference>
<dbReference type="InterPro" id="IPR006037">
    <property type="entry name" value="RCK_C"/>
</dbReference>
<dbReference type="InterPro" id="IPR036721">
    <property type="entry name" value="RCK_C_sf"/>
</dbReference>
<dbReference type="InterPro" id="IPR006512">
    <property type="entry name" value="YidE_YbjL"/>
</dbReference>
<dbReference type="NCBIfam" id="TIGR01625">
    <property type="entry name" value="YidE_YbjL_dupl"/>
    <property type="match status" value="1"/>
</dbReference>
<dbReference type="PANTHER" id="PTHR30445:SF9">
    <property type="match status" value="1"/>
</dbReference>
<dbReference type="PANTHER" id="PTHR30445">
    <property type="entry name" value="K(+)_H(+) ANTIPORTER SUBUNIT KHTT"/>
    <property type="match status" value="1"/>
</dbReference>
<dbReference type="Pfam" id="PF06826">
    <property type="entry name" value="Asp-Al_Ex"/>
    <property type="match status" value="2"/>
</dbReference>
<dbReference type="SUPFAM" id="SSF116726">
    <property type="entry name" value="TrkA C-terminal domain-like"/>
    <property type="match status" value="2"/>
</dbReference>
<dbReference type="PROSITE" id="PS51202">
    <property type="entry name" value="RCK_C"/>
    <property type="match status" value="1"/>
</dbReference>
<reference key="1">
    <citation type="journal article" date="2003" name="Nat. Genet.">
        <title>Comparative analysis of the genome sequences of Bordetella pertussis, Bordetella parapertussis and Bordetella bronchiseptica.</title>
        <authorList>
            <person name="Parkhill J."/>
            <person name="Sebaihia M."/>
            <person name="Preston A."/>
            <person name="Murphy L.D."/>
            <person name="Thomson N.R."/>
            <person name="Harris D.E."/>
            <person name="Holden M.T.G."/>
            <person name="Churcher C.M."/>
            <person name="Bentley S.D."/>
            <person name="Mungall K.L."/>
            <person name="Cerdeno-Tarraga A.-M."/>
            <person name="Temple L."/>
            <person name="James K.D."/>
            <person name="Harris B."/>
            <person name="Quail M.A."/>
            <person name="Achtman M."/>
            <person name="Atkin R."/>
            <person name="Baker S."/>
            <person name="Basham D."/>
            <person name="Bason N."/>
            <person name="Cherevach I."/>
            <person name="Chillingworth T."/>
            <person name="Collins M."/>
            <person name="Cronin A."/>
            <person name="Davis P."/>
            <person name="Doggett J."/>
            <person name="Feltwell T."/>
            <person name="Goble A."/>
            <person name="Hamlin N."/>
            <person name="Hauser H."/>
            <person name="Holroyd S."/>
            <person name="Jagels K."/>
            <person name="Leather S."/>
            <person name="Moule S."/>
            <person name="Norberczak H."/>
            <person name="O'Neil S."/>
            <person name="Ormond D."/>
            <person name="Price C."/>
            <person name="Rabbinowitsch E."/>
            <person name="Rutter S."/>
            <person name="Sanders M."/>
            <person name="Saunders D."/>
            <person name="Seeger K."/>
            <person name="Sharp S."/>
            <person name="Simmonds M."/>
            <person name="Skelton J."/>
            <person name="Squares R."/>
            <person name="Squares S."/>
            <person name="Stevens K."/>
            <person name="Unwin L."/>
            <person name="Whitehead S."/>
            <person name="Barrell B.G."/>
            <person name="Maskell D.J."/>
        </authorList>
    </citation>
    <scope>NUCLEOTIDE SEQUENCE [LARGE SCALE GENOMIC DNA]</scope>
    <source>
        <strain>12822 / ATCC BAA-587 / NCTC 13253</strain>
    </source>
</reference>
<comment type="subcellular location">
    <subcellularLocation>
        <location evidence="3">Cell membrane</location>
        <topology evidence="3">Multi-pass membrane protein</topology>
    </subcellularLocation>
</comment>
<comment type="similarity">
    <text evidence="3">Belongs to the AAE transporter (TC 2.A.81) family.</text>
</comment>
<organism>
    <name type="scientific">Bordetella parapertussis (strain 12822 / ATCC BAA-587 / NCTC 13253)</name>
    <dbReference type="NCBI Taxonomy" id="257311"/>
    <lineage>
        <taxon>Bacteria</taxon>
        <taxon>Pseudomonadati</taxon>
        <taxon>Pseudomonadota</taxon>
        <taxon>Betaproteobacteria</taxon>
        <taxon>Burkholderiales</taxon>
        <taxon>Alcaligenaceae</taxon>
        <taxon>Bordetella</taxon>
    </lineage>
</organism>
<accession>Q7W8J2</accession>
<evidence type="ECO:0000255" key="1"/>
<evidence type="ECO:0000255" key="2">
    <source>
        <dbReference type="PROSITE-ProRule" id="PRU00544"/>
    </source>
</evidence>
<evidence type="ECO:0000305" key="3"/>
<gene>
    <name type="ordered locus">BPP2141</name>
</gene>
<name>Y2141_BORPA</name>
<proteinExistence type="inferred from homology"/>
<feature type="chain" id="PRO_0000208761" description="Uncharacterized transporter BPP2141">
    <location>
        <begin position="1"/>
        <end position="571"/>
    </location>
</feature>
<feature type="transmembrane region" description="Helical" evidence="1">
    <location>
        <begin position="10"/>
        <end position="29"/>
    </location>
</feature>
<feature type="transmembrane region" description="Helical" evidence="1">
    <location>
        <begin position="36"/>
        <end position="55"/>
    </location>
</feature>
<feature type="transmembrane region" description="Helical" evidence="1">
    <location>
        <begin position="65"/>
        <end position="87"/>
    </location>
</feature>
<feature type="transmembrane region" description="Helical" evidence="1">
    <location>
        <begin position="96"/>
        <end position="118"/>
    </location>
</feature>
<feature type="transmembrane region" description="Helical" evidence="1">
    <location>
        <begin position="166"/>
        <end position="188"/>
    </location>
</feature>
<feature type="transmembrane region" description="Helical" evidence="1">
    <location>
        <begin position="388"/>
        <end position="406"/>
    </location>
</feature>
<feature type="transmembrane region" description="Helical" evidence="1">
    <location>
        <begin position="411"/>
        <end position="433"/>
    </location>
</feature>
<feature type="transmembrane region" description="Helical" evidence="1">
    <location>
        <begin position="446"/>
        <end position="465"/>
    </location>
</feature>
<feature type="transmembrane region" description="Helical" evidence="1">
    <location>
        <begin position="480"/>
        <end position="502"/>
    </location>
</feature>
<feature type="transmembrane region" description="Helical" evidence="1">
    <location>
        <begin position="509"/>
        <end position="531"/>
    </location>
</feature>
<feature type="transmembrane region" description="Helical" evidence="1">
    <location>
        <begin position="546"/>
        <end position="568"/>
    </location>
</feature>
<feature type="domain" description="RCK C-terminal" evidence="2">
    <location>
        <begin position="294"/>
        <end position="378"/>
    </location>
</feature>
<keyword id="KW-1003">Cell membrane</keyword>
<keyword id="KW-0472">Membrane</keyword>
<keyword id="KW-0812">Transmembrane</keyword>
<keyword id="KW-1133">Transmembrane helix</keyword>
<keyword id="KW-0813">Transport</keyword>
<sequence length="571" mass="59877">MTIEALADVVRLHPELALFAAIVFGHFIGKIEIRKVSLGTVVGTLIAGMILGLLFEPEIPDLLKWAFFDLFLFAVGYSAGPQFFASLKREALPQMALAVVVSCTGLAAAIAMVALFRFDPGLSAGLVSGSMTQSAALGSALSAIAAMDVDEATRALLTAHAPLADATTYIFGEVGLILFVTVVAPRLLKVDLRQVAREAEAELQARTDEDDAALWDQAPLSLRTYRLENAELDQRTVHEFERRYAAGRLTVTGIRRGDQLLRDVGADARLALGDIVLVASRRAGVVGAALEVGTEVDDQELLSEPMVRASIVLTRREMAGKTLGELARGAARGLFLDSLHRGESTLPRAMGTRVQRGDVFKLTGSRAAIATAARNLGFIEHDQGRTDLVYLAGGVVVGILFGLLQVRLTGVPLGLGTSGGVLVVGLVAGWLYSRYPVVGHIPEPALRLLSDVGLIVFIAAIGLAAGPHAVQAIHEGGIALFAKLVGAGVVVTLAGPIAGLLLGHYVLKLPPVALLPGIAGAQTTVATLNALKERGGSDVYAIGFTVPFAVSNVLITLWGPVIVACAVALSR</sequence>
<protein>
    <recommendedName>
        <fullName>Uncharacterized transporter BPP2141</fullName>
    </recommendedName>
</protein>